<protein>
    <recommendedName>
        <fullName>Uncharacterized protein YflK</fullName>
    </recommendedName>
</protein>
<organism>
    <name type="scientific">Bacillus subtilis (strain 168)</name>
    <dbReference type="NCBI Taxonomy" id="224308"/>
    <lineage>
        <taxon>Bacteria</taxon>
        <taxon>Bacillati</taxon>
        <taxon>Bacillota</taxon>
        <taxon>Bacilli</taxon>
        <taxon>Bacillales</taxon>
        <taxon>Bacillaceae</taxon>
        <taxon>Bacillus</taxon>
    </lineage>
</organism>
<proteinExistence type="predicted"/>
<sequence>MKQERYSVLSLNLGKPQTLEYDGKKIETGIMKRPAKSAVMLYRENFEGDGQADLVNHGGPDKAVCVYPAEHYPFWEEFLSRPLSNAAFGENLTVAGLTEENVCIGDVFRLDEAVVQVSQPRQPCVKLAKKFGVKEMVLKVQQTGYTGFYFRVLEEGRVSPGANLELLSRGEKGISVQFANRINYHDAKNLTAIERILSEAALSESWRASFMKKKDRLLPVE</sequence>
<dbReference type="EMBL" id="D86417">
    <property type="protein sequence ID" value="BAA22304.1"/>
    <property type="molecule type" value="Genomic_DNA"/>
</dbReference>
<dbReference type="EMBL" id="AL009126">
    <property type="protein sequence ID" value="CAB12594.1"/>
    <property type="molecule type" value="Genomic_DNA"/>
</dbReference>
<dbReference type="PIR" id="A69811">
    <property type="entry name" value="A69811"/>
</dbReference>
<dbReference type="RefSeq" id="NP_388646.1">
    <property type="nucleotide sequence ID" value="NC_000964.3"/>
</dbReference>
<dbReference type="RefSeq" id="WP_003243175.1">
    <property type="nucleotide sequence ID" value="NZ_OZ025638.1"/>
</dbReference>
<dbReference type="SMR" id="O34542"/>
<dbReference type="FunCoup" id="O34542">
    <property type="interactions" value="68"/>
</dbReference>
<dbReference type="STRING" id="224308.BSU07650"/>
<dbReference type="PaxDb" id="224308-BSU07650"/>
<dbReference type="EnsemblBacteria" id="CAB12594">
    <property type="protein sequence ID" value="CAB12594"/>
    <property type="gene ID" value="BSU_07650"/>
</dbReference>
<dbReference type="GeneID" id="936119"/>
<dbReference type="KEGG" id="bsu:BSU07650"/>
<dbReference type="PATRIC" id="fig|224308.179.peg.831"/>
<dbReference type="eggNOG" id="COG2258">
    <property type="taxonomic scope" value="Bacteria"/>
</dbReference>
<dbReference type="InParanoid" id="O34542"/>
<dbReference type="OrthoDB" id="9786134at2"/>
<dbReference type="PhylomeDB" id="O34542"/>
<dbReference type="BioCyc" id="BSUB:BSU07650-MONOMER"/>
<dbReference type="Proteomes" id="UP000001570">
    <property type="component" value="Chromosome"/>
</dbReference>
<dbReference type="GO" id="GO:0005829">
    <property type="term" value="C:cytosol"/>
    <property type="evidence" value="ECO:0000318"/>
    <property type="project" value="GO_Central"/>
</dbReference>
<dbReference type="GO" id="GO:0030151">
    <property type="term" value="F:molybdenum ion binding"/>
    <property type="evidence" value="ECO:0007669"/>
    <property type="project" value="InterPro"/>
</dbReference>
<dbReference type="GO" id="GO:0016491">
    <property type="term" value="F:oxidoreductase activity"/>
    <property type="evidence" value="ECO:0000318"/>
    <property type="project" value="GO_Central"/>
</dbReference>
<dbReference type="GO" id="GO:0030170">
    <property type="term" value="F:pyridoxal phosphate binding"/>
    <property type="evidence" value="ECO:0007669"/>
    <property type="project" value="InterPro"/>
</dbReference>
<dbReference type="Gene3D" id="2.40.33.20">
    <property type="entry name" value="PK beta-barrel domain-like"/>
    <property type="match status" value="1"/>
</dbReference>
<dbReference type="InterPro" id="IPR052353">
    <property type="entry name" value="Benzoxazolinone_Detox_Enz"/>
</dbReference>
<dbReference type="InterPro" id="IPR005302">
    <property type="entry name" value="MoCF_Sase_C"/>
</dbReference>
<dbReference type="InterPro" id="IPR011037">
    <property type="entry name" value="Pyrv_Knase-like_insert_dom_sf"/>
</dbReference>
<dbReference type="InterPro" id="IPR005163">
    <property type="entry name" value="YiiM-like_3-alpha_domain"/>
</dbReference>
<dbReference type="PANTHER" id="PTHR30212:SF4">
    <property type="entry name" value="MOSC DOMAIN-CONTAINING PROTEIN"/>
    <property type="match status" value="1"/>
</dbReference>
<dbReference type="PANTHER" id="PTHR30212">
    <property type="entry name" value="PROTEIN YIIM"/>
    <property type="match status" value="1"/>
</dbReference>
<dbReference type="Pfam" id="PF03473">
    <property type="entry name" value="MOSC"/>
    <property type="match status" value="1"/>
</dbReference>
<dbReference type="Pfam" id="PF03475">
    <property type="entry name" value="YiiM_3-alpha"/>
    <property type="match status" value="1"/>
</dbReference>
<dbReference type="SUPFAM" id="SSF50800">
    <property type="entry name" value="PK beta-barrel domain-like"/>
    <property type="match status" value="1"/>
</dbReference>
<dbReference type="PROSITE" id="PS51340">
    <property type="entry name" value="MOSC"/>
    <property type="match status" value="1"/>
</dbReference>
<keyword id="KW-1185">Reference proteome</keyword>
<evidence type="ECO:0000255" key="1">
    <source>
        <dbReference type="PROSITE-ProRule" id="PRU00670"/>
    </source>
</evidence>
<name>YFLK_BACSU</name>
<reference key="1">
    <citation type="journal article" date="1997" name="Gene">
        <title>Cloning and sequencing of a 35.7 kb in the 70 degree-73 degree region of the Bacillus subtilis genome reveal genes for a new two-component system, three spore germination proteins, an iron uptake system and a general stress response protein.</title>
        <authorList>
            <person name="Yamamoto H."/>
            <person name="Uchiyama S."/>
            <person name="Nugroho F.A."/>
            <person name="Sekiguchi J."/>
        </authorList>
    </citation>
    <scope>NUCLEOTIDE SEQUENCE [GENOMIC DNA]</scope>
    <source>
        <strain>168 / AC327</strain>
    </source>
</reference>
<reference key="2">
    <citation type="journal article" date="1997" name="Nature">
        <title>The complete genome sequence of the Gram-positive bacterium Bacillus subtilis.</title>
        <authorList>
            <person name="Kunst F."/>
            <person name="Ogasawara N."/>
            <person name="Moszer I."/>
            <person name="Albertini A.M."/>
            <person name="Alloni G."/>
            <person name="Azevedo V."/>
            <person name="Bertero M.G."/>
            <person name="Bessieres P."/>
            <person name="Bolotin A."/>
            <person name="Borchert S."/>
            <person name="Borriss R."/>
            <person name="Boursier L."/>
            <person name="Brans A."/>
            <person name="Braun M."/>
            <person name="Brignell S.C."/>
            <person name="Bron S."/>
            <person name="Brouillet S."/>
            <person name="Bruschi C.V."/>
            <person name="Caldwell B."/>
            <person name="Capuano V."/>
            <person name="Carter N.M."/>
            <person name="Choi S.-K."/>
            <person name="Codani J.-J."/>
            <person name="Connerton I.F."/>
            <person name="Cummings N.J."/>
            <person name="Daniel R.A."/>
            <person name="Denizot F."/>
            <person name="Devine K.M."/>
            <person name="Duesterhoeft A."/>
            <person name="Ehrlich S.D."/>
            <person name="Emmerson P.T."/>
            <person name="Entian K.-D."/>
            <person name="Errington J."/>
            <person name="Fabret C."/>
            <person name="Ferrari E."/>
            <person name="Foulger D."/>
            <person name="Fritz C."/>
            <person name="Fujita M."/>
            <person name="Fujita Y."/>
            <person name="Fuma S."/>
            <person name="Galizzi A."/>
            <person name="Galleron N."/>
            <person name="Ghim S.-Y."/>
            <person name="Glaser P."/>
            <person name="Goffeau A."/>
            <person name="Golightly E.J."/>
            <person name="Grandi G."/>
            <person name="Guiseppi G."/>
            <person name="Guy B.J."/>
            <person name="Haga K."/>
            <person name="Haiech J."/>
            <person name="Harwood C.R."/>
            <person name="Henaut A."/>
            <person name="Hilbert H."/>
            <person name="Holsappel S."/>
            <person name="Hosono S."/>
            <person name="Hullo M.-F."/>
            <person name="Itaya M."/>
            <person name="Jones L.-M."/>
            <person name="Joris B."/>
            <person name="Karamata D."/>
            <person name="Kasahara Y."/>
            <person name="Klaerr-Blanchard M."/>
            <person name="Klein C."/>
            <person name="Kobayashi Y."/>
            <person name="Koetter P."/>
            <person name="Koningstein G."/>
            <person name="Krogh S."/>
            <person name="Kumano M."/>
            <person name="Kurita K."/>
            <person name="Lapidus A."/>
            <person name="Lardinois S."/>
            <person name="Lauber J."/>
            <person name="Lazarevic V."/>
            <person name="Lee S.-M."/>
            <person name="Levine A."/>
            <person name="Liu H."/>
            <person name="Masuda S."/>
            <person name="Mauel C."/>
            <person name="Medigue C."/>
            <person name="Medina N."/>
            <person name="Mellado R.P."/>
            <person name="Mizuno M."/>
            <person name="Moestl D."/>
            <person name="Nakai S."/>
            <person name="Noback M."/>
            <person name="Noone D."/>
            <person name="O'Reilly M."/>
            <person name="Ogawa K."/>
            <person name="Ogiwara A."/>
            <person name="Oudega B."/>
            <person name="Park S.-H."/>
            <person name="Parro V."/>
            <person name="Pohl T.M."/>
            <person name="Portetelle D."/>
            <person name="Porwollik S."/>
            <person name="Prescott A.M."/>
            <person name="Presecan E."/>
            <person name="Pujic P."/>
            <person name="Purnelle B."/>
            <person name="Rapoport G."/>
            <person name="Rey M."/>
            <person name="Reynolds S."/>
            <person name="Rieger M."/>
            <person name="Rivolta C."/>
            <person name="Rocha E."/>
            <person name="Roche B."/>
            <person name="Rose M."/>
            <person name="Sadaie Y."/>
            <person name="Sato T."/>
            <person name="Scanlan E."/>
            <person name="Schleich S."/>
            <person name="Schroeter R."/>
            <person name="Scoffone F."/>
            <person name="Sekiguchi J."/>
            <person name="Sekowska A."/>
            <person name="Seror S.J."/>
            <person name="Serror P."/>
            <person name="Shin B.-S."/>
            <person name="Soldo B."/>
            <person name="Sorokin A."/>
            <person name="Tacconi E."/>
            <person name="Takagi T."/>
            <person name="Takahashi H."/>
            <person name="Takemaru K."/>
            <person name="Takeuchi M."/>
            <person name="Tamakoshi A."/>
            <person name="Tanaka T."/>
            <person name="Terpstra P."/>
            <person name="Tognoni A."/>
            <person name="Tosato V."/>
            <person name="Uchiyama S."/>
            <person name="Vandenbol M."/>
            <person name="Vannier F."/>
            <person name="Vassarotti A."/>
            <person name="Viari A."/>
            <person name="Wambutt R."/>
            <person name="Wedler E."/>
            <person name="Wedler H."/>
            <person name="Weitzenegger T."/>
            <person name="Winters P."/>
            <person name="Wipat A."/>
            <person name="Yamamoto H."/>
            <person name="Yamane K."/>
            <person name="Yasumoto K."/>
            <person name="Yata K."/>
            <person name="Yoshida K."/>
            <person name="Yoshikawa H.-F."/>
            <person name="Zumstein E."/>
            <person name="Yoshikawa H."/>
            <person name="Danchin A."/>
        </authorList>
    </citation>
    <scope>NUCLEOTIDE SEQUENCE [LARGE SCALE GENOMIC DNA]</scope>
    <source>
        <strain>168</strain>
    </source>
</reference>
<gene>
    <name type="primary">yflK</name>
    <name type="ordered locus">BSU07650</name>
</gene>
<feature type="chain" id="PRO_0000360629" description="Uncharacterized protein YflK">
    <location>
        <begin position="1"/>
        <end position="221"/>
    </location>
</feature>
<feature type="domain" description="MOSC" evidence="1">
    <location>
        <begin position="33"/>
        <end position="167"/>
    </location>
</feature>
<accession>O34542</accession>
<accession>Q79ET6</accession>